<evidence type="ECO:0000255" key="1">
    <source>
        <dbReference type="HAMAP-Rule" id="MF_00480"/>
    </source>
</evidence>
<evidence type="ECO:0000305" key="2"/>
<organism>
    <name type="scientific">Listeria monocytogenes serovar 1/2a (strain ATCC BAA-679 / EGD-e)</name>
    <dbReference type="NCBI Taxonomy" id="169963"/>
    <lineage>
        <taxon>Bacteria</taxon>
        <taxon>Bacillati</taxon>
        <taxon>Bacillota</taxon>
        <taxon>Bacilli</taxon>
        <taxon>Bacillales</taxon>
        <taxon>Listeriaceae</taxon>
        <taxon>Listeria</taxon>
    </lineage>
</organism>
<keyword id="KW-0002">3D-structure</keyword>
<keyword id="KW-1185">Reference proteome</keyword>
<keyword id="KW-0687">Ribonucleoprotein</keyword>
<keyword id="KW-0689">Ribosomal protein</keyword>
<keyword id="KW-0694">RNA-binding</keyword>
<keyword id="KW-0699">rRNA-binding</keyword>
<keyword id="KW-0820">tRNA-binding</keyword>
<gene>
    <name evidence="1" type="primary">rpsG</name>
    <name type="ordered locus">lmo2655</name>
</gene>
<proteinExistence type="evidence at protein level"/>
<accession>P66611</accession>
<accession>Q927I4</accession>
<dbReference type="EMBL" id="AL591984">
    <property type="protein sequence ID" value="CAD00868.1"/>
    <property type="molecule type" value="Genomic_DNA"/>
</dbReference>
<dbReference type="PIR" id="AF1406">
    <property type="entry name" value="AF1406"/>
</dbReference>
<dbReference type="RefSeq" id="NP_466177.1">
    <property type="nucleotide sequence ID" value="NC_003210.1"/>
</dbReference>
<dbReference type="RefSeq" id="WP_003722012.1">
    <property type="nucleotide sequence ID" value="NZ_CP149495.1"/>
</dbReference>
<dbReference type="PDB" id="7NHN">
    <property type="method" value="EM"/>
    <property type="resolution" value="2.90 A"/>
    <property type="chains" value="h=1-156"/>
</dbReference>
<dbReference type="PDBsum" id="7NHN"/>
<dbReference type="EMDB" id="EMD-12334"/>
<dbReference type="SMR" id="P66611"/>
<dbReference type="STRING" id="169963.gene:17595372"/>
<dbReference type="PaxDb" id="169963-lmo2655"/>
<dbReference type="EnsemblBacteria" id="CAD00868">
    <property type="protein sequence ID" value="CAD00868"/>
    <property type="gene ID" value="CAD00868"/>
</dbReference>
<dbReference type="GeneID" id="93236077"/>
<dbReference type="GeneID" id="987165"/>
<dbReference type="KEGG" id="lmo:lmo2655"/>
<dbReference type="PATRIC" id="fig|169963.11.peg.2721"/>
<dbReference type="eggNOG" id="COG0049">
    <property type="taxonomic scope" value="Bacteria"/>
</dbReference>
<dbReference type="HOGENOM" id="CLU_072226_1_1_9"/>
<dbReference type="OrthoDB" id="9807653at2"/>
<dbReference type="PhylomeDB" id="P66611"/>
<dbReference type="BioCyc" id="LMON169963:LMO2655-MONOMER"/>
<dbReference type="Proteomes" id="UP000000817">
    <property type="component" value="Chromosome"/>
</dbReference>
<dbReference type="GO" id="GO:0022627">
    <property type="term" value="C:cytosolic small ribosomal subunit"/>
    <property type="evidence" value="ECO:0000318"/>
    <property type="project" value="GO_Central"/>
</dbReference>
<dbReference type="GO" id="GO:0005840">
    <property type="term" value="C:ribosome"/>
    <property type="evidence" value="ECO:0000318"/>
    <property type="project" value="GO_Central"/>
</dbReference>
<dbReference type="GO" id="GO:0003729">
    <property type="term" value="F:mRNA binding"/>
    <property type="evidence" value="ECO:0000318"/>
    <property type="project" value="GO_Central"/>
</dbReference>
<dbReference type="GO" id="GO:0019843">
    <property type="term" value="F:rRNA binding"/>
    <property type="evidence" value="ECO:0000318"/>
    <property type="project" value="GO_Central"/>
</dbReference>
<dbReference type="GO" id="GO:0003735">
    <property type="term" value="F:structural constituent of ribosome"/>
    <property type="evidence" value="ECO:0000318"/>
    <property type="project" value="GO_Central"/>
</dbReference>
<dbReference type="GO" id="GO:0000049">
    <property type="term" value="F:tRNA binding"/>
    <property type="evidence" value="ECO:0007669"/>
    <property type="project" value="UniProtKB-UniRule"/>
</dbReference>
<dbReference type="GO" id="GO:0000028">
    <property type="term" value="P:ribosomal small subunit assembly"/>
    <property type="evidence" value="ECO:0000318"/>
    <property type="project" value="GO_Central"/>
</dbReference>
<dbReference type="GO" id="GO:0006412">
    <property type="term" value="P:translation"/>
    <property type="evidence" value="ECO:0000318"/>
    <property type="project" value="GO_Central"/>
</dbReference>
<dbReference type="CDD" id="cd14869">
    <property type="entry name" value="uS7_Bacteria"/>
    <property type="match status" value="1"/>
</dbReference>
<dbReference type="FunFam" id="1.10.455.10:FF:000001">
    <property type="entry name" value="30S ribosomal protein S7"/>
    <property type="match status" value="1"/>
</dbReference>
<dbReference type="Gene3D" id="1.10.455.10">
    <property type="entry name" value="Ribosomal protein S7 domain"/>
    <property type="match status" value="1"/>
</dbReference>
<dbReference type="HAMAP" id="MF_00480_B">
    <property type="entry name" value="Ribosomal_uS7_B"/>
    <property type="match status" value="1"/>
</dbReference>
<dbReference type="InterPro" id="IPR000235">
    <property type="entry name" value="Ribosomal_uS7"/>
</dbReference>
<dbReference type="InterPro" id="IPR005717">
    <property type="entry name" value="Ribosomal_uS7_bac/org-type"/>
</dbReference>
<dbReference type="InterPro" id="IPR020606">
    <property type="entry name" value="Ribosomal_uS7_CS"/>
</dbReference>
<dbReference type="InterPro" id="IPR023798">
    <property type="entry name" value="Ribosomal_uS7_dom"/>
</dbReference>
<dbReference type="InterPro" id="IPR036823">
    <property type="entry name" value="Ribosomal_uS7_dom_sf"/>
</dbReference>
<dbReference type="NCBIfam" id="TIGR01029">
    <property type="entry name" value="rpsG_bact"/>
    <property type="match status" value="1"/>
</dbReference>
<dbReference type="PANTHER" id="PTHR11205">
    <property type="entry name" value="RIBOSOMAL PROTEIN S7"/>
    <property type="match status" value="1"/>
</dbReference>
<dbReference type="Pfam" id="PF00177">
    <property type="entry name" value="Ribosomal_S7"/>
    <property type="match status" value="1"/>
</dbReference>
<dbReference type="PIRSF" id="PIRSF002122">
    <property type="entry name" value="RPS7p_RPS7a_RPS5e_RPS7o"/>
    <property type="match status" value="1"/>
</dbReference>
<dbReference type="SUPFAM" id="SSF47973">
    <property type="entry name" value="Ribosomal protein S7"/>
    <property type="match status" value="1"/>
</dbReference>
<dbReference type="PROSITE" id="PS00052">
    <property type="entry name" value="RIBOSOMAL_S7"/>
    <property type="match status" value="1"/>
</dbReference>
<feature type="chain" id="PRO_0000124288" description="Small ribosomal subunit protein uS7">
    <location>
        <begin position="1"/>
        <end position="156"/>
    </location>
</feature>
<comment type="function">
    <text evidence="1">One of the primary rRNA binding proteins, it binds directly to 16S rRNA where it nucleates assembly of the head domain of the 30S subunit. Is located at the subunit interface close to the decoding center, probably blocks exit of the E-site tRNA.</text>
</comment>
<comment type="subunit">
    <text evidence="1">Part of the 30S ribosomal subunit. Contacts proteins S9 and S11.</text>
</comment>
<comment type="similarity">
    <text evidence="1">Belongs to the universal ribosomal protein uS7 family.</text>
</comment>
<sequence length="156" mass="17817">MPRKGPVAKRDVLPDPIYNSKLVTRLINKMMVDGKRGKSQAILYSAFDIIAQETGKDPMEVFEQAMKNIMPLLEVKARRVGGANYQVPIEVRADRRSTLGLRWLVNYARLRGEKTMEVRVAREIMDAANNTGASVKKREDTHKMADANRAFAHYRW</sequence>
<reference key="1">
    <citation type="journal article" date="2001" name="Science">
        <title>Comparative genomics of Listeria species.</title>
        <authorList>
            <person name="Glaser P."/>
            <person name="Frangeul L."/>
            <person name="Buchrieser C."/>
            <person name="Rusniok C."/>
            <person name="Amend A."/>
            <person name="Baquero F."/>
            <person name="Berche P."/>
            <person name="Bloecker H."/>
            <person name="Brandt P."/>
            <person name="Chakraborty T."/>
            <person name="Charbit A."/>
            <person name="Chetouani F."/>
            <person name="Couve E."/>
            <person name="de Daruvar A."/>
            <person name="Dehoux P."/>
            <person name="Domann E."/>
            <person name="Dominguez-Bernal G."/>
            <person name="Duchaud E."/>
            <person name="Durant L."/>
            <person name="Dussurget O."/>
            <person name="Entian K.-D."/>
            <person name="Fsihi H."/>
            <person name="Garcia-del Portillo F."/>
            <person name="Garrido P."/>
            <person name="Gautier L."/>
            <person name="Goebel W."/>
            <person name="Gomez-Lopez N."/>
            <person name="Hain T."/>
            <person name="Hauf J."/>
            <person name="Jackson D."/>
            <person name="Jones L.-M."/>
            <person name="Kaerst U."/>
            <person name="Kreft J."/>
            <person name="Kuhn M."/>
            <person name="Kunst F."/>
            <person name="Kurapkat G."/>
            <person name="Madueno E."/>
            <person name="Maitournam A."/>
            <person name="Mata Vicente J."/>
            <person name="Ng E."/>
            <person name="Nedjari H."/>
            <person name="Nordsiek G."/>
            <person name="Novella S."/>
            <person name="de Pablos B."/>
            <person name="Perez-Diaz J.-C."/>
            <person name="Purcell R."/>
            <person name="Remmel B."/>
            <person name="Rose M."/>
            <person name="Schlueter T."/>
            <person name="Simoes N."/>
            <person name="Tierrez A."/>
            <person name="Vazquez-Boland J.-A."/>
            <person name="Voss H."/>
            <person name="Wehland J."/>
            <person name="Cossart P."/>
        </authorList>
    </citation>
    <scope>NUCLEOTIDE SEQUENCE [LARGE SCALE GENOMIC DNA]</scope>
    <source>
        <strain>ATCC BAA-679 / EGD-e</strain>
    </source>
</reference>
<name>RS7_LISMO</name>
<protein>
    <recommendedName>
        <fullName evidence="1">Small ribosomal subunit protein uS7</fullName>
    </recommendedName>
    <alternativeName>
        <fullName evidence="2">30S ribosomal protein S7</fullName>
    </alternativeName>
</protein>